<keyword id="KW-0963">Cytoplasm</keyword>
<keyword id="KW-0206">Cytoskeleton</keyword>
<keyword id="KW-0256">Endoplasmic reticulum</keyword>
<keyword id="KW-1017">Isopeptide bond</keyword>
<keyword id="KW-0472">Membrane</keyword>
<keyword id="KW-0539">Nucleus</keyword>
<keyword id="KW-0597">Phosphoprotein</keyword>
<keyword id="KW-1185">Reference proteome</keyword>
<keyword id="KW-0832">Ubl conjugation</keyword>
<keyword id="KW-0833">Ubl conjugation pathway</keyword>
<proteinExistence type="evidence at protein level"/>
<feature type="chain" id="PRO_0000220519" description="CDK5 regulatory subunit-associated protein 3">
    <location>
        <begin position="1"/>
        <end position="504"/>
    </location>
</feature>
<feature type="region of interest" description="Required for interaction with UFL1 and mediates interaction with CHEK1" evidence="1">
    <location>
        <begin position="268"/>
        <end position="504"/>
    </location>
</feature>
<feature type="region of interest" description="RPL10a-binding domain (RBD)" evidence="1">
    <location>
        <begin position="353"/>
        <end position="368"/>
    </location>
</feature>
<feature type="short sequence motif" description="Shuffled ATG8-binding motif 1" evidence="1">
    <location>
        <begin position="266"/>
        <end position="269"/>
    </location>
</feature>
<feature type="short sequence motif" description="Shuffled ATG8-binding motif 2" evidence="1">
    <location>
        <begin position="290"/>
        <end position="293"/>
    </location>
</feature>
<feature type="short sequence motif" description="Shuffled ATG8-binding motif 3" evidence="1">
    <location>
        <begin position="308"/>
        <end position="311"/>
    </location>
</feature>
<feature type="cross-link" description="Glycyl lysine isopeptide (Lys-Gly) (interchain with G-Cter in SUMO2)" evidence="1">
    <location>
        <position position="448"/>
    </location>
</feature>
<evidence type="ECO:0000250" key="1">
    <source>
        <dbReference type="UniProtKB" id="Q96JB5"/>
    </source>
</evidence>
<evidence type="ECO:0000250" key="2">
    <source>
        <dbReference type="UniProtKB" id="Q99LM2"/>
    </source>
</evidence>
<evidence type="ECO:0000269" key="3">
    <source>
    </source>
</evidence>
<evidence type="ECO:0000269" key="4">
    <source>
    </source>
</evidence>
<evidence type="ECO:0000269" key="5">
    <source>
    </source>
</evidence>
<evidence type="ECO:0000303" key="6">
    <source>
    </source>
</evidence>
<evidence type="ECO:0000305" key="7"/>
<evidence type="ECO:0000312" key="8">
    <source>
        <dbReference type="RGD" id="620002"/>
    </source>
</evidence>
<reference key="1">
    <citation type="journal article" date="2000" name="Gene">
        <title>Cloning of three novel neuronal Cdk5 activator binding proteins.</title>
        <authorList>
            <person name="Ching Y.-P."/>
            <person name="Qi Z."/>
            <person name="Wang J.H."/>
        </authorList>
    </citation>
    <scope>NUCLEOTIDE SEQUENCE [MRNA]</scope>
    <scope>INTERACTION WITH CDK5R1</scope>
    <scope>PHOSPHORYLATION</scope>
</reference>
<reference key="2">
    <citation type="journal article" date="2002" name="Biochem. Biophys. Res. Commun.">
        <title>A novel gene IC53 stimulates ECV304 cell proliferation and is upregulated in failing heart.</title>
        <authorList>
            <person name="Chen J."/>
            <person name="Liu B."/>
            <person name="Liu Y.Q."/>
            <person name="Han Y."/>
            <person name="Yu H."/>
            <person name="Zhang Y."/>
            <person name="Lu L."/>
            <person name="Zhen Y."/>
            <person name="Hui R.T."/>
        </authorList>
    </citation>
    <scope>TISSUE SPECIFICITY</scope>
</reference>
<reference key="3">
    <citation type="journal article" date="2010" name="EMBO J.">
        <title>Suppression of the novel ER protein Maxer by mutant ataxin-1 in Bergman glia contributes to non-cell-autonomous toxicity.</title>
        <authorList>
            <person name="Shiwaku H."/>
            <person name="Yoshimura N."/>
            <person name="Tamura T."/>
            <person name="Sone M."/>
            <person name="Ogishima S."/>
            <person name="Watase K."/>
            <person name="Tagawa K."/>
            <person name="Okazawa H."/>
        </authorList>
    </citation>
    <scope>INTERACTION WITH UFL1</scope>
</reference>
<comment type="function">
    <text evidence="1 2">Substrate adapter of E3 ligase complexes mediating ufmylation, the covalent attachment of the ubiquitin-like modifier UFM1 to substrate proteins, and which is involved in various processes, such as ribosome recycling and reticulophagy (also called ER-phagy) (By similarity). As part of the UREL complex, plays a key role in ribosome recycling by promoting mono-ufmylation of RPL26/uL24 subunit of the 60S ribosome (By similarity). Ufmylation of RPL26/uL24 occurs on free 60S ribosomes following ribosome dissociation: it weakens the junction between post-termination 60S subunits and SEC61 translocons, promoting release and recycling of the large ribosomal subunit from the endoplasmic reticulum membrane (By similarity). Ufmylation of RPL26/uL24 and subsequent 60S ribosome recycling either take place after normal termination of translation or after ribosome stalling during cotranslational translocation at the endoplasmic reticulum (By similarity). Within the UREL complex, CDK5RAP3 acts as a substrate adapter that constrains UFL1 ligase activity to mono-ufmylate RPL26/uL24 at 'Lys-134' (By similarity). The UREL complex is also involved in reticulophagy in response to endoplasmic reticulum stress by promoting ufmylation of proteins such as CYB5R3, thereby promoting lysosomal degradation of ufmylated proteins (By similarity). Also acts as a regulator of transcription: negatively regulates NF-kappa-B-mediated gene transcription through the control of RELA phosphorylation (By similarity). Also regulates mitotic G2/M transition checkpoint and mitotic G2 DNA damage checkpoint (By similarity). Through its interaction with CDKN2A/ARF and MDM2 may induce MDM2-dependent p53/TP53 ubiquitination, stabilization and activation in the nucleus, thereby promoting G1 cell cycle arrest and inhibition of cell proliferation (By similarity). May also play a role in the rupture of the nuclear envelope during apoptosis (By similarity). May regulate MAPK14 activity by regulating its dephosphorylation by PPM1D/WIP1 (By similarity). Required for liver development (By similarity).</text>
</comment>
<comment type="subunit">
    <text evidence="1 3 5">Substrate adapter component of the UFM1 ribosome E3 ligase (UREL) complex, composed of UFL1, DDRGK1 and CDK5RAP3 (By similarity). Interaction with UFL1 anchors CDK5RAP3 in the cytoplasm, preventing its translocation to the nucleus which allows expression of the CCND1 cyclin and progression of cells through the G1/S transition (PubMed:20531390). Interacts with ATG8 family proteins MAP1LC3A, MAP1LC3B, GABARAP, GABARAPL1 and GABARAPL2 (By similarity). Interacts with CDK5R1; competes with CDK5RAP1 and CDK5RAP2 (PubMed:10721722). Interacts with RELA (By similarity). Interacts with CHEK1; may negatively regulate CHEK1 and thereby stimulate entry into mitosis (By similarity). Interacts with CDKN2A/ARF and MDM2; forms a ternary complex involved in regulation of p53/TP53 (By similarity). Interacts with MAPK14 (By similarity). Interacts with CCNB1 (By similarity). Interacts with TUBG1; may regulate CDK5RAP3 in mitotic G2/M transition checkpoint (By similarity).</text>
</comment>
<comment type="subcellular location">
    <subcellularLocation>
        <location evidence="1">Endoplasmic reticulum membrane</location>
    </subcellularLocation>
    <subcellularLocation>
        <location evidence="1">Cytoplasm</location>
    </subcellularLocation>
    <subcellularLocation>
        <location evidence="1">Nucleus</location>
    </subcellularLocation>
    <subcellularLocation>
        <location evidence="1">Cytoplasm</location>
        <location evidence="1">Cytoskeleton</location>
        <location evidence="1">Microtubule organizing center</location>
        <location evidence="1">Centrosome</location>
    </subcellularLocation>
    <subcellularLocation>
        <location evidence="1">Cytoplasm</location>
        <location evidence="1">Cytoskeleton</location>
    </subcellularLocation>
    <text evidence="1">Tethered to the endoplasmic reticulum membrane as part of the UFM1 ribosome E3 ligase (UREL) complex. Colocalizes and associates with microtubules.</text>
</comment>
<comment type="tissue specificity">
    <text evidence="4">Expressed in vascular endothelium. Up-regulated in failing heart. Highly expressed in the ventricular section in subacute and chronic ischemic heart failure.</text>
</comment>
<comment type="domain">
    <text evidence="1">The shuffled ATG8-binding motifs mediate interaction with both ATG8 family protein and UFM1.</text>
</comment>
<comment type="domain">
    <text evidence="1">The RPL10a-binding domain (RBD) anchors the UREL complex onto the ribosome via association with RPL10a/ul1.</text>
</comment>
<comment type="PTM">
    <text evidence="3">May be phosphorylated by CDK5.</text>
</comment>
<comment type="PTM">
    <text evidence="1">Ubiquitinated. Probably triggers proteasomal degradation and is negatively regulated by UFL1.</text>
</comment>
<comment type="PTM">
    <text evidence="2">May be ufmylated.</text>
</comment>
<comment type="PTM">
    <text evidence="1">Cleaved by caspases early during apoptosis, the resulting peptides may play a role in rupture of the nuclear envelope.</text>
</comment>
<comment type="similarity">
    <text evidence="7">Belongs to the CDK5RAP3 family.</text>
</comment>
<gene>
    <name evidence="8" type="primary">Cdk5rap3</name>
</gene>
<organism>
    <name type="scientific">Rattus norvegicus</name>
    <name type="common">Rat</name>
    <dbReference type="NCBI Taxonomy" id="10116"/>
    <lineage>
        <taxon>Eukaryota</taxon>
        <taxon>Metazoa</taxon>
        <taxon>Chordata</taxon>
        <taxon>Craniata</taxon>
        <taxon>Vertebrata</taxon>
        <taxon>Euteleostomi</taxon>
        <taxon>Mammalia</taxon>
        <taxon>Eutheria</taxon>
        <taxon>Euarchontoglires</taxon>
        <taxon>Glires</taxon>
        <taxon>Rodentia</taxon>
        <taxon>Myomorpha</taxon>
        <taxon>Muroidea</taxon>
        <taxon>Muridae</taxon>
        <taxon>Murinae</taxon>
        <taxon>Rattus</taxon>
    </lineage>
</organism>
<name>CK5P3_RAT</name>
<protein>
    <recommendedName>
        <fullName evidence="7">CDK5 regulatory subunit-associated protein 3</fullName>
    </recommendedName>
    <alternativeName>
        <fullName evidence="6">CDK5 activator-binding protein C53</fullName>
    </alternativeName>
</protein>
<sequence length="504" mass="57045">MQDHQHVPIDIQTSKLLDWLVDRRHCNLKWQSLVLTIREKINTAIQDMPESQEIAQLLSGSYIHYFHCLRIVDLLKGTEASTKNIFGRYSSQRMKDWQEIISLYEKDNTYLVELSSLLVRNVNYEIPSLKKQIAKCQQLQQDYSRKEEEGQAGAAEMREQFYHSCKQYGITGDNVRRELLALVKDLPSQLAEIGAGAQSLGEAIDLYQACVEFVCDSPTEQVLPMLRYVQPKGNSTVYEWRTGTEPSVVERPQLEDPPEQVQEDEIDWGDFGLEAVSDSGNIISAETPGIDWGISLESESKDAGADKIDWGDNAVASEITVLETGTEAPEGVARGSDALTLLEYPETRNQFIDELMELEIFLSQRAVEMSEEADILSVSQFQLAPAILQGQTKEKMLSLVSTLQHLIGQLTSLDLQHLFMILASPRYVDRVTELLQQKLKQSQLLALKKDLMVEKQQEALQEQAALEPKLDLLLEKTRELQKLIEADISKRYNGRPVNLMGTSV</sequence>
<dbReference type="EMBL" id="AF177476">
    <property type="protein sequence ID" value="AAF60222.1"/>
    <property type="molecule type" value="mRNA"/>
</dbReference>
<dbReference type="SMR" id="Q9JLH7"/>
<dbReference type="BioGRID" id="249477">
    <property type="interactions" value="1"/>
</dbReference>
<dbReference type="FunCoup" id="Q9JLH7">
    <property type="interactions" value="2213"/>
</dbReference>
<dbReference type="IntAct" id="Q9JLH7">
    <property type="interactions" value="3"/>
</dbReference>
<dbReference type="STRING" id="10116.ENSRNOP00000065240"/>
<dbReference type="PhosphoSitePlus" id="Q9JLH7"/>
<dbReference type="jPOST" id="Q9JLH7"/>
<dbReference type="PaxDb" id="10116-ENSRNOP00000065240"/>
<dbReference type="AGR" id="RGD:620002"/>
<dbReference type="RGD" id="620002">
    <property type="gene designation" value="Cdk5rap3"/>
</dbReference>
<dbReference type="eggNOG" id="KOG2607">
    <property type="taxonomic scope" value="Eukaryota"/>
</dbReference>
<dbReference type="InParanoid" id="Q9JLH7"/>
<dbReference type="OrthoDB" id="340432at2759"/>
<dbReference type="PhylomeDB" id="Q9JLH7"/>
<dbReference type="PRO" id="PR:Q9JLH7"/>
<dbReference type="Proteomes" id="UP000002494">
    <property type="component" value="Unplaced"/>
</dbReference>
<dbReference type="GO" id="GO:0005813">
    <property type="term" value="C:centrosome"/>
    <property type="evidence" value="ECO:0000250"/>
    <property type="project" value="UniProtKB"/>
</dbReference>
<dbReference type="GO" id="GO:0005737">
    <property type="term" value="C:cytoplasm"/>
    <property type="evidence" value="ECO:0000250"/>
    <property type="project" value="UniProtKB"/>
</dbReference>
<dbReference type="GO" id="GO:0012505">
    <property type="term" value="C:endomembrane system"/>
    <property type="evidence" value="ECO:0000318"/>
    <property type="project" value="GO_Central"/>
</dbReference>
<dbReference type="GO" id="GO:0005789">
    <property type="term" value="C:endoplasmic reticulum membrane"/>
    <property type="evidence" value="ECO:0000250"/>
    <property type="project" value="UniProtKB"/>
</dbReference>
<dbReference type="GO" id="GO:0005874">
    <property type="term" value="C:microtubule"/>
    <property type="evidence" value="ECO:0000266"/>
    <property type="project" value="RGD"/>
</dbReference>
<dbReference type="GO" id="GO:0005634">
    <property type="term" value="C:nucleus"/>
    <property type="evidence" value="ECO:0000250"/>
    <property type="project" value="UniProtKB"/>
</dbReference>
<dbReference type="GO" id="GO:0032991">
    <property type="term" value="C:protein-containing complex"/>
    <property type="evidence" value="ECO:0000266"/>
    <property type="project" value="RGD"/>
</dbReference>
<dbReference type="GO" id="GO:0030332">
    <property type="term" value="F:cyclin binding"/>
    <property type="evidence" value="ECO:0000266"/>
    <property type="project" value="RGD"/>
</dbReference>
<dbReference type="GO" id="GO:0097371">
    <property type="term" value="F:MDM2/MDM4 family protein binding"/>
    <property type="evidence" value="ECO:0000266"/>
    <property type="project" value="RGD"/>
</dbReference>
<dbReference type="GO" id="GO:0051019">
    <property type="term" value="F:mitogen-activated protein kinase binding"/>
    <property type="evidence" value="ECO:0000266"/>
    <property type="project" value="RGD"/>
</dbReference>
<dbReference type="GO" id="GO:0051059">
    <property type="term" value="F:NF-kappaB binding"/>
    <property type="evidence" value="ECO:0000266"/>
    <property type="project" value="RGD"/>
</dbReference>
<dbReference type="GO" id="GO:0019901">
    <property type="term" value="F:protein kinase binding"/>
    <property type="evidence" value="ECO:0000266"/>
    <property type="project" value="RGD"/>
</dbReference>
<dbReference type="GO" id="GO:0044877">
    <property type="term" value="F:protein-containing complex binding"/>
    <property type="evidence" value="ECO:0000314"/>
    <property type="project" value="RGD"/>
</dbReference>
<dbReference type="GO" id="GO:1990756">
    <property type="term" value="F:ubiquitin-like ligase-substrate adaptor activity"/>
    <property type="evidence" value="ECO:0000250"/>
    <property type="project" value="UniProtKB"/>
</dbReference>
<dbReference type="GO" id="GO:0044389">
    <property type="term" value="F:ubiquitin-like protein ligase binding"/>
    <property type="evidence" value="ECO:0000250"/>
    <property type="project" value="UniProtKB"/>
</dbReference>
<dbReference type="GO" id="GO:0030262">
    <property type="term" value="P:apoptotic nuclear changes"/>
    <property type="evidence" value="ECO:0000250"/>
    <property type="project" value="UniProtKB"/>
</dbReference>
<dbReference type="GO" id="GO:0008283">
    <property type="term" value="P:cell population proliferation"/>
    <property type="evidence" value="ECO:0000250"/>
    <property type="project" value="UniProtKB"/>
</dbReference>
<dbReference type="GO" id="GO:0060318">
    <property type="term" value="P:definitive erythrocyte differentiation"/>
    <property type="evidence" value="ECO:0000250"/>
    <property type="project" value="UniProtKB"/>
</dbReference>
<dbReference type="GO" id="GO:0030968">
    <property type="term" value="P:endoplasmic reticulum unfolded protein response"/>
    <property type="evidence" value="ECO:0000250"/>
    <property type="project" value="UniProtKB"/>
</dbReference>
<dbReference type="GO" id="GO:0001889">
    <property type="term" value="P:liver development"/>
    <property type="evidence" value="ECO:0000250"/>
    <property type="project" value="UniProtKB"/>
</dbReference>
<dbReference type="GO" id="GO:0007095">
    <property type="term" value="P:mitotic G2 DNA damage checkpoint signaling"/>
    <property type="evidence" value="ECO:0000250"/>
    <property type="project" value="UniProtKB"/>
</dbReference>
<dbReference type="GO" id="GO:0044818">
    <property type="term" value="P:mitotic G2/M transition checkpoint"/>
    <property type="evidence" value="ECO:0000250"/>
    <property type="project" value="UniProtKB"/>
</dbReference>
<dbReference type="GO" id="GO:0043407">
    <property type="term" value="P:negative regulation of MAP kinase activity"/>
    <property type="evidence" value="ECO:0000250"/>
    <property type="project" value="UniProtKB"/>
</dbReference>
<dbReference type="GO" id="GO:0032088">
    <property type="term" value="P:negative regulation of NF-kappaB transcription factor activity"/>
    <property type="evidence" value="ECO:0000250"/>
    <property type="project" value="UniProtKB"/>
</dbReference>
<dbReference type="GO" id="GO:0042177">
    <property type="term" value="P:negative regulation of protein catabolic process"/>
    <property type="evidence" value="ECO:0000250"/>
    <property type="project" value="UniProtKB"/>
</dbReference>
<dbReference type="GO" id="GO:0044387">
    <property type="term" value="P:negative regulation of protein kinase activity by regulation of protein phosphorylation"/>
    <property type="evidence" value="ECO:0000250"/>
    <property type="project" value="UniProtKB"/>
</dbReference>
<dbReference type="GO" id="GO:0001933">
    <property type="term" value="P:negative regulation of protein phosphorylation"/>
    <property type="evidence" value="ECO:0000250"/>
    <property type="project" value="UniProtKB"/>
</dbReference>
<dbReference type="GO" id="GO:0071901">
    <property type="term" value="P:negative regulation of protein serine/threonine kinase activity"/>
    <property type="evidence" value="ECO:0000250"/>
    <property type="project" value="UniProtKB"/>
</dbReference>
<dbReference type="GO" id="GO:1900182">
    <property type="term" value="P:positive regulation of protein localization to nucleus"/>
    <property type="evidence" value="ECO:0000250"/>
    <property type="project" value="UniProtKB"/>
</dbReference>
<dbReference type="GO" id="GO:0031398">
    <property type="term" value="P:positive regulation of protein ubiquitination"/>
    <property type="evidence" value="ECO:0000250"/>
    <property type="project" value="UniProtKB"/>
</dbReference>
<dbReference type="GO" id="GO:0140501">
    <property type="term" value="P:positive regulation of reticulophagy"/>
    <property type="evidence" value="ECO:0000250"/>
    <property type="project" value="UniProtKB"/>
</dbReference>
<dbReference type="GO" id="GO:1901798">
    <property type="term" value="P:positive regulation of signal transduction by p53 class mediator"/>
    <property type="evidence" value="ECO:0000250"/>
    <property type="project" value="UniProtKB"/>
</dbReference>
<dbReference type="GO" id="GO:0045944">
    <property type="term" value="P:positive regulation of transcription by RNA polymerase II"/>
    <property type="evidence" value="ECO:0000266"/>
    <property type="project" value="RGD"/>
</dbReference>
<dbReference type="GO" id="GO:0071569">
    <property type="term" value="P:protein ufmylation"/>
    <property type="evidence" value="ECO:0000250"/>
    <property type="project" value="UniProtKB"/>
</dbReference>
<dbReference type="GO" id="GO:0000079">
    <property type="term" value="P:regulation of cyclin-dependent protein serine/threonine kinase activity"/>
    <property type="evidence" value="ECO:0000314"/>
    <property type="project" value="UniProtKB"/>
</dbReference>
<dbReference type="GO" id="GO:0007346">
    <property type="term" value="P:regulation of mitotic cell cycle"/>
    <property type="evidence" value="ECO:0000318"/>
    <property type="project" value="GO_Central"/>
</dbReference>
<dbReference type="GO" id="GO:0010921">
    <property type="term" value="P:regulation of phosphatase activity"/>
    <property type="evidence" value="ECO:0000250"/>
    <property type="project" value="UniProtKB"/>
</dbReference>
<dbReference type="GO" id="GO:0072344">
    <property type="term" value="P:rescue of stalled ribosome"/>
    <property type="evidence" value="ECO:0000266"/>
    <property type="project" value="RGD"/>
</dbReference>
<dbReference type="GO" id="GO:0034976">
    <property type="term" value="P:response to endoplasmic reticulum stress"/>
    <property type="evidence" value="ECO:0000250"/>
    <property type="project" value="UniProtKB"/>
</dbReference>
<dbReference type="GO" id="GO:0032790">
    <property type="term" value="P:ribosome disassembly"/>
    <property type="evidence" value="ECO:0000250"/>
    <property type="project" value="UniProtKB"/>
</dbReference>
<dbReference type="InterPro" id="IPR008491">
    <property type="entry name" value="CDK5RAP3"/>
</dbReference>
<dbReference type="PANTHER" id="PTHR14894">
    <property type="entry name" value="CDK5 REGULATORY SUBUNIT-ASSOCIATED PROTEIN 3"/>
    <property type="match status" value="1"/>
</dbReference>
<dbReference type="PANTHER" id="PTHR14894:SF0">
    <property type="entry name" value="CDK5 REGULATORY SUBUNIT-ASSOCIATED PROTEIN 3"/>
    <property type="match status" value="1"/>
</dbReference>
<dbReference type="Pfam" id="PF05600">
    <property type="entry name" value="CDK5RAP3"/>
    <property type="match status" value="1"/>
</dbReference>
<accession>Q9JLH7</accession>